<evidence type="ECO:0000250" key="1">
    <source>
        <dbReference type="UniProtKB" id="P56254"/>
    </source>
</evidence>
<evidence type="ECO:0000255" key="2">
    <source>
        <dbReference type="PROSITE-ProRule" id="PRU00395"/>
    </source>
</evidence>
<evidence type="ECO:0000269" key="3">
    <source>
    </source>
</evidence>
<evidence type="ECO:0000305" key="4"/>
<reference evidence="4" key="1">
    <citation type="journal article" date="2008" name="Phytochemistry">
        <title>The alpine violet, Viola biflora, is a rich source of cyclotides with potent cytotoxicity.</title>
        <authorList>
            <person name="Herrmann A."/>
            <person name="Burman R."/>
            <person name="Mylne J.S."/>
            <person name="Karlsson G."/>
            <person name="Gullbo J."/>
            <person name="Craik D.J."/>
            <person name="Clark R.J."/>
            <person name="Goeransson U."/>
        </authorList>
    </citation>
    <scope>PROTEIN SEQUENCE</scope>
    <scope>MASS SPECTROMETRY</scope>
</reference>
<organism>
    <name type="scientific">Viola biflora</name>
    <name type="common">Yellow wood violet</name>
    <dbReference type="NCBI Taxonomy" id="214529"/>
    <lineage>
        <taxon>Eukaryota</taxon>
        <taxon>Viridiplantae</taxon>
        <taxon>Streptophyta</taxon>
        <taxon>Embryophyta</taxon>
        <taxon>Tracheophyta</taxon>
        <taxon>Spermatophyta</taxon>
        <taxon>Magnoliopsida</taxon>
        <taxon>eudicotyledons</taxon>
        <taxon>Gunneridae</taxon>
        <taxon>Pentapetalae</taxon>
        <taxon>rosids</taxon>
        <taxon>fabids</taxon>
        <taxon>Malpighiales</taxon>
        <taxon>Violaceae</taxon>
        <taxon>Viola</taxon>
        <taxon>Viola subgen. Viola</taxon>
        <taxon>Viola sect. Chamaemelanium</taxon>
    </lineage>
</organism>
<name>VARA_VIOBI</name>
<comment type="function">
    <text evidence="4">Probably participates in a plant defense mechanism.</text>
</comment>
<comment type="domain">
    <text evidence="1">The presence of a 'disulfide through disulfide knot' structurally defines this protein as a knottin.</text>
</comment>
<comment type="PTM">
    <text evidence="2 3">This is a cyclic peptide.</text>
</comment>
<comment type="mass spectrometry" mass="2877.0" method="Electrospray" evidence="3"/>
<comment type="similarity">
    <text evidence="2">Belongs to the cyclotide family. Moebius subfamily.</text>
</comment>
<comment type="caution">
    <text evidence="4">This peptide is cyclic. The start position was chosen by similarity to OAK1 (kalata-B1) for which the DNA sequence is known.</text>
</comment>
<accession>P85525</accession>
<keyword id="KW-0903">Direct protein sequencing</keyword>
<keyword id="KW-1015">Disulfide bond</keyword>
<keyword id="KW-0960">Knottin</keyword>
<keyword id="KW-0611">Plant defense</keyword>
<feature type="peptide" id="PRO_0000341440" description="Cyclotide varv-A">
    <location>
        <begin position="1"/>
        <end position="29"/>
    </location>
</feature>
<feature type="disulfide bond" evidence="1 2">
    <location>
        <begin position="5"/>
        <end position="19"/>
    </location>
</feature>
<feature type="disulfide bond" evidence="1 2">
    <location>
        <begin position="9"/>
        <end position="21"/>
    </location>
</feature>
<feature type="disulfide bond" evidence="1 2">
    <location>
        <begin position="14"/>
        <end position="26"/>
    </location>
</feature>
<feature type="cross-link" description="Cyclopeptide (Gly-Asn)" evidence="3">
    <location>
        <begin position="1"/>
        <end position="29"/>
    </location>
</feature>
<protein>
    <recommendedName>
        <fullName>Cyclotide varv-A</fullName>
    </recommendedName>
</protein>
<dbReference type="SMR" id="P85525"/>
<dbReference type="GO" id="GO:0006952">
    <property type="term" value="P:defense response"/>
    <property type="evidence" value="ECO:0007669"/>
    <property type="project" value="UniProtKB-KW"/>
</dbReference>
<dbReference type="InterPro" id="IPR005535">
    <property type="entry name" value="Cyclotide"/>
</dbReference>
<dbReference type="InterPro" id="IPR012324">
    <property type="entry name" value="Cyclotide_moebius_CS"/>
</dbReference>
<dbReference type="InterPro" id="IPR036146">
    <property type="entry name" value="Cyclotide_sf"/>
</dbReference>
<dbReference type="Pfam" id="PF03784">
    <property type="entry name" value="Cyclotide"/>
    <property type="match status" value="1"/>
</dbReference>
<dbReference type="PIRSF" id="PIRSF037891">
    <property type="entry name" value="Cycloviolacin"/>
    <property type="match status" value="1"/>
</dbReference>
<dbReference type="SUPFAM" id="SSF57038">
    <property type="entry name" value="Cyclotides"/>
    <property type="match status" value="1"/>
</dbReference>
<dbReference type="PROSITE" id="PS51052">
    <property type="entry name" value="CYCLOTIDE"/>
    <property type="match status" value="1"/>
</dbReference>
<dbReference type="PROSITE" id="PS60009">
    <property type="entry name" value="CYCLOTIDE_MOEBIUS"/>
    <property type="match status" value="1"/>
</dbReference>
<sequence length="29" mass="2902">GLPVCGETCVGGTCNTPGCSCSWPVCTRN</sequence>
<proteinExistence type="evidence at protein level"/>